<comment type="function">
    <text evidence="1">In its thiocarboxylated form (CysO-COSH), is the sulfur donor in the CysM-dependent cysteine biosynthetic pathway. May be of particular importance for cysteine biosynthesis in the persistent phase of M.tuberculosis (By similarity).</text>
</comment>
<comment type="pathway">
    <text>Amino-acid biosynthesis; L-cysteine biosynthesis.</text>
</comment>
<comment type="similarity">
    <text evidence="2">Belongs to the sulfur carrier protein CysO family.</text>
</comment>
<proteinExistence type="inferred from homology"/>
<sequence>MNVTVSIPTILRPHTGGQKSVSASGDTLGAVISDLEANYSGISERLMDPSSPGKLHRFVNIYVNDEDVRFSGGLATAIADGDSVTILPAVAGG</sequence>
<gene>
    <name type="primary">cysO</name>
    <name type="synonym">cfp10A</name>
    <name type="ordered locus">MT1376.1</name>
</gene>
<protein>
    <recommendedName>
        <fullName>Sulfur carrier protein CysO</fullName>
    </recommendedName>
    <alternativeName>
        <fullName>9.5 kDa culture filtrate antigen cfp10A</fullName>
    </alternativeName>
</protein>
<feature type="chain" id="PRO_0000427022" description="Sulfur carrier protein CysO">
    <location>
        <begin position="1"/>
        <end position="93"/>
    </location>
</feature>
<reference key="1">
    <citation type="journal article" date="2002" name="J. Bacteriol.">
        <title>Whole-genome comparison of Mycobacterium tuberculosis clinical and laboratory strains.</title>
        <authorList>
            <person name="Fleischmann R.D."/>
            <person name="Alland D."/>
            <person name="Eisen J.A."/>
            <person name="Carpenter L."/>
            <person name="White O."/>
            <person name="Peterson J.D."/>
            <person name="DeBoy R.T."/>
            <person name="Dodson R.J."/>
            <person name="Gwinn M.L."/>
            <person name="Haft D.H."/>
            <person name="Hickey E.K."/>
            <person name="Kolonay J.F."/>
            <person name="Nelson W.C."/>
            <person name="Umayam L.A."/>
            <person name="Ermolaeva M.D."/>
            <person name="Salzberg S.L."/>
            <person name="Delcher A."/>
            <person name="Utterback T.R."/>
            <person name="Weidman J.F."/>
            <person name="Khouri H.M."/>
            <person name="Gill J."/>
            <person name="Mikula A."/>
            <person name="Bishai W."/>
            <person name="Jacobs W.R. Jr."/>
            <person name="Venter J.C."/>
            <person name="Fraser C.M."/>
        </authorList>
    </citation>
    <scope>NUCLEOTIDE SEQUENCE [LARGE SCALE GENOMIC DNA]</scope>
    <source>
        <strain>CDC 1551 / Oshkosh</strain>
    </source>
</reference>
<dbReference type="EMBL" id="AE000516">
    <property type="protein sequence ID" value="AAK45641.1"/>
    <property type="molecule type" value="Genomic_DNA"/>
</dbReference>
<dbReference type="PIR" id="C70771">
    <property type="entry name" value="C70771"/>
</dbReference>
<dbReference type="RefSeq" id="WP_003406910.1">
    <property type="nucleotide sequence ID" value="NZ_KK341227.1"/>
</dbReference>
<dbReference type="SMR" id="P9WP32"/>
<dbReference type="GeneID" id="45425313"/>
<dbReference type="KEGG" id="mtc:MT1376.1"/>
<dbReference type="PATRIC" id="fig|83331.31.peg.1484"/>
<dbReference type="HOGENOM" id="CLU_114601_1_0_11"/>
<dbReference type="UniPathway" id="UPA00136"/>
<dbReference type="Proteomes" id="UP000001020">
    <property type="component" value="Chromosome"/>
</dbReference>
<dbReference type="GO" id="GO:0019344">
    <property type="term" value="P:cysteine biosynthetic process"/>
    <property type="evidence" value="ECO:0007669"/>
    <property type="project" value="UniProtKB-UniPathway"/>
</dbReference>
<dbReference type="CDD" id="cd17074">
    <property type="entry name" value="Ubl_CysO_like"/>
    <property type="match status" value="1"/>
</dbReference>
<dbReference type="FunFam" id="3.10.20.30:FF:000038">
    <property type="entry name" value="Molybdopterin synthase sulfur carrier subunit"/>
    <property type="match status" value="1"/>
</dbReference>
<dbReference type="Gene3D" id="3.10.20.30">
    <property type="match status" value="1"/>
</dbReference>
<dbReference type="InterPro" id="IPR012675">
    <property type="entry name" value="Beta-grasp_dom_sf"/>
</dbReference>
<dbReference type="InterPro" id="IPR016155">
    <property type="entry name" value="Mopterin_synth/thiamin_S_b"/>
</dbReference>
<dbReference type="InterPro" id="IPR052045">
    <property type="entry name" value="Sulfur_Carrier/Prot_Modifier"/>
</dbReference>
<dbReference type="InterPro" id="IPR003749">
    <property type="entry name" value="ThiS/MoaD-like"/>
</dbReference>
<dbReference type="PANTHER" id="PTHR38031:SF1">
    <property type="entry name" value="SULFUR CARRIER PROTEIN CYSO"/>
    <property type="match status" value="1"/>
</dbReference>
<dbReference type="PANTHER" id="PTHR38031">
    <property type="entry name" value="SULFUR CARRIER PROTEIN SLR0821-RELATED"/>
    <property type="match status" value="1"/>
</dbReference>
<dbReference type="Pfam" id="PF02597">
    <property type="entry name" value="ThiS"/>
    <property type="match status" value="1"/>
</dbReference>
<dbReference type="SUPFAM" id="SSF54285">
    <property type="entry name" value="MoaD/ThiS"/>
    <property type="match status" value="1"/>
</dbReference>
<evidence type="ECO:0000250" key="1"/>
<evidence type="ECO:0000305" key="2"/>
<name>CYSO_MYCTO</name>
<accession>P9WP32</accession>
<accession>L0T9C0</accession>
<accession>P0A646</accession>
<accession>Q10646</accession>
<organism>
    <name type="scientific">Mycobacterium tuberculosis (strain CDC 1551 / Oshkosh)</name>
    <dbReference type="NCBI Taxonomy" id="83331"/>
    <lineage>
        <taxon>Bacteria</taxon>
        <taxon>Bacillati</taxon>
        <taxon>Actinomycetota</taxon>
        <taxon>Actinomycetes</taxon>
        <taxon>Mycobacteriales</taxon>
        <taxon>Mycobacteriaceae</taxon>
        <taxon>Mycobacterium</taxon>
        <taxon>Mycobacterium tuberculosis complex</taxon>
    </lineage>
</organism>
<keyword id="KW-0028">Amino-acid biosynthesis</keyword>
<keyword id="KW-0198">Cysteine biosynthesis</keyword>
<keyword id="KW-1185">Reference proteome</keyword>